<accession>B1I509</accession>
<proteinExistence type="inferred from homology"/>
<name>Y1598_DESAP</name>
<comment type="similarity">
    <text evidence="1">Belongs to the RemA family.</text>
</comment>
<sequence length="95" mass="10557">MEIRLINIGFGNIVSANRIVAIVSPESAPIKRMITEARDRGMLIDATYGRRTRAVIITDSDHVILSAVQPETVAHRLVSKMEQAHHHHHGDNGKD</sequence>
<gene>
    <name type="ordered locus">Daud_1598</name>
</gene>
<reference key="1">
    <citation type="submission" date="2007-10" db="EMBL/GenBank/DDBJ databases">
        <title>Complete sequence of chromosome of Desulforudis audaxviator MP104C.</title>
        <authorList>
            <person name="Copeland A."/>
            <person name="Lucas S."/>
            <person name="Lapidus A."/>
            <person name="Barry K."/>
            <person name="Glavina del Rio T."/>
            <person name="Dalin E."/>
            <person name="Tice H."/>
            <person name="Bruce D."/>
            <person name="Pitluck S."/>
            <person name="Lowry S.R."/>
            <person name="Larimer F."/>
            <person name="Land M.L."/>
            <person name="Hauser L."/>
            <person name="Kyrpides N."/>
            <person name="Ivanova N.N."/>
            <person name="Richardson P."/>
        </authorList>
    </citation>
    <scope>NUCLEOTIDE SEQUENCE [LARGE SCALE GENOMIC DNA]</scope>
    <source>
        <strain>MP104C</strain>
    </source>
</reference>
<organism>
    <name type="scientific">Desulforudis audaxviator (strain MP104C)</name>
    <dbReference type="NCBI Taxonomy" id="477974"/>
    <lineage>
        <taxon>Bacteria</taxon>
        <taxon>Bacillati</taxon>
        <taxon>Bacillota</taxon>
        <taxon>Clostridia</taxon>
        <taxon>Thermoanaerobacterales</taxon>
        <taxon>Candidatus Desulforudaceae</taxon>
        <taxon>Candidatus Desulforudis</taxon>
    </lineage>
</organism>
<feature type="chain" id="PRO_1000198220" description="Putative regulatory protein Daud_1598">
    <location>
        <begin position="1"/>
        <end position="95"/>
    </location>
</feature>
<evidence type="ECO:0000255" key="1">
    <source>
        <dbReference type="HAMAP-Rule" id="MF_01503"/>
    </source>
</evidence>
<dbReference type="EMBL" id="CP000860">
    <property type="protein sequence ID" value="ACA60100.1"/>
    <property type="molecule type" value="Genomic_DNA"/>
</dbReference>
<dbReference type="RefSeq" id="WP_012302681.1">
    <property type="nucleotide sequence ID" value="NC_010424.1"/>
</dbReference>
<dbReference type="SMR" id="B1I509"/>
<dbReference type="STRING" id="477974.Daud_1598"/>
<dbReference type="KEGG" id="dau:Daud_1598"/>
<dbReference type="eggNOG" id="COG2052">
    <property type="taxonomic scope" value="Bacteria"/>
</dbReference>
<dbReference type="HOGENOM" id="CLU_165326_0_0_9"/>
<dbReference type="OrthoDB" id="5432174at2"/>
<dbReference type="Proteomes" id="UP000008544">
    <property type="component" value="Chromosome"/>
</dbReference>
<dbReference type="HAMAP" id="MF_01503">
    <property type="entry name" value="RemA"/>
    <property type="match status" value="1"/>
</dbReference>
<dbReference type="InterPro" id="IPR007169">
    <property type="entry name" value="RemA-like"/>
</dbReference>
<dbReference type="NCBIfam" id="NF046064">
    <property type="entry name" value="MtxBflmRegRemA"/>
    <property type="match status" value="1"/>
</dbReference>
<dbReference type="NCBIfam" id="NF003315">
    <property type="entry name" value="PRK04323.1"/>
    <property type="match status" value="1"/>
</dbReference>
<dbReference type="PANTHER" id="PTHR38449:SF1">
    <property type="entry name" value="REGULATORY PROTEIN SSL2874-RELATED"/>
    <property type="match status" value="1"/>
</dbReference>
<dbReference type="PANTHER" id="PTHR38449">
    <property type="entry name" value="REGULATORY PROTEIN TM_1690-RELATED"/>
    <property type="match status" value="1"/>
</dbReference>
<dbReference type="Pfam" id="PF04025">
    <property type="entry name" value="RemA-like"/>
    <property type="match status" value="1"/>
</dbReference>
<protein>
    <recommendedName>
        <fullName evidence="1">Putative regulatory protein Daud_1598</fullName>
    </recommendedName>
</protein>
<keyword id="KW-1185">Reference proteome</keyword>